<sequence>MALLDPHYPLGRHNTFRFEAAARYAAHVRAAQDIAEALTDPRARGLPVLVLGGGSNIVLTRDFDGLVLLMEIPGVQVGRATLDGRAVHTVTAGAGESWHGLVARTVADGLPGLENLALIPGTVGAAPIQNIGAYGVEIKDRFHSLRAYDRHAGEFVTLDAADCAFGYRDSLFKRAGADRYVIAEVTFALPVDWQPDTHYAELARELAARDIAAPAAQDIFDAVVAIRRRKLPDPAEIGNAGSFFKNPIVDTATRDALLARFPGLVGYAQPDGSYKLAAGWMIDQCGFKGRQSGAVGVYDKQALVLVHRGGGSAVQLMTLAREIQDTVHARFGVRIEPEPVVI</sequence>
<accession>Q8XWC4</accession>
<evidence type="ECO:0000255" key="1">
    <source>
        <dbReference type="HAMAP-Rule" id="MF_00037"/>
    </source>
</evidence>
<comment type="function">
    <text evidence="1">Cell wall formation.</text>
</comment>
<comment type="catalytic activity">
    <reaction evidence="1">
        <text>UDP-N-acetyl-alpha-D-muramate + NADP(+) = UDP-N-acetyl-3-O-(1-carboxyvinyl)-alpha-D-glucosamine + NADPH + H(+)</text>
        <dbReference type="Rhea" id="RHEA:12248"/>
        <dbReference type="ChEBI" id="CHEBI:15378"/>
        <dbReference type="ChEBI" id="CHEBI:57783"/>
        <dbReference type="ChEBI" id="CHEBI:58349"/>
        <dbReference type="ChEBI" id="CHEBI:68483"/>
        <dbReference type="ChEBI" id="CHEBI:70757"/>
        <dbReference type="EC" id="1.3.1.98"/>
    </reaction>
</comment>
<comment type="cofactor">
    <cofactor evidence="1">
        <name>FAD</name>
        <dbReference type="ChEBI" id="CHEBI:57692"/>
    </cofactor>
</comment>
<comment type="pathway">
    <text evidence="1">Cell wall biogenesis; peptidoglycan biosynthesis.</text>
</comment>
<comment type="subcellular location">
    <subcellularLocation>
        <location evidence="1">Cytoplasm</location>
    </subcellularLocation>
</comment>
<comment type="similarity">
    <text evidence="1">Belongs to the MurB family.</text>
</comment>
<gene>
    <name evidence="1" type="primary">murB</name>
    <name type="ordered locus">RSc2550</name>
    <name type="ORF">RS00729</name>
</gene>
<reference key="1">
    <citation type="journal article" date="2002" name="Nature">
        <title>Genome sequence of the plant pathogen Ralstonia solanacearum.</title>
        <authorList>
            <person name="Salanoubat M."/>
            <person name="Genin S."/>
            <person name="Artiguenave F."/>
            <person name="Gouzy J."/>
            <person name="Mangenot S."/>
            <person name="Arlat M."/>
            <person name="Billault A."/>
            <person name="Brottier P."/>
            <person name="Camus J.-C."/>
            <person name="Cattolico L."/>
            <person name="Chandler M."/>
            <person name="Choisne N."/>
            <person name="Claudel-Renard C."/>
            <person name="Cunnac S."/>
            <person name="Demange N."/>
            <person name="Gaspin C."/>
            <person name="Lavie M."/>
            <person name="Moisan A."/>
            <person name="Robert C."/>
            <person name="Saurin W."/>
            <person name="Schiex T."/>
            <person name="Siguier P."/>
            <person name="Thebault P."/>
            <person name="Whalen M."/>
            <person name="Wincker P."/>
            <person name="Levy M."/>
            <person name="Weissenbach J."/>
            <person name="Boucher C.A."/>
        </authorList>
    </citation>
    <scope>NUCLEOTIDE SEQUENCE [LARGE SCALE GENOMIC DNA]</scope>
    <source>
        <strain>ATCC BAA-1114 / GMI1000</strain>
    </source>
</reference>
<proteinExistence type="inferred from homology"/>
<name>MURB_RALN1</name>
<keyword id="KW-0131">Cell cycle</keyword>
<keyword id="KW-0132">Cell division</keyword>
<keyword id="KW-0133">Cell shape</keyword>
<keyword id="KW-0961">Cell wall biogenesis/degradation</keyword>
<keyword id="KW-0963">Cytoplasm</keyword>
<keyword id="KW-0274">FAD</keyword>
<keyword id="KW-0285">Flavoprotein</keyword>
<keyword id="KW-0521">NADP</keyword>
<keyword id="KW-0560">Oxidoreductase</keyword>
<keyword id="KW-0573">Peptidoglycan synthesis</keyword>
<keyword id="KW-1185">Reference proteome</keyword>
<feature type="chain" id="PRO_0000179245" description="UDP-N-acetylenolpyruvoylglucosamine reductase">
    <location>
        <begin position="1"/>
        <end position="342"/>
    </location>
</feature>
<feature type="domain" description="FAD-binding PCMH-type" evidence="1">
    <location>
        <begin position="17"/>
        <end position="192"/>
    </location>
</feature>
<feature type="active site" evidence="1">
    <location>
        <position position="168"/>
    </location>
</feature>
<feature type="active site" description="Proton donor" evidence="1">
    <location>
        <position position="242"/>
    </location>
</feature>
<feature type="active site" evidence="1">
    <location>
        <position position="338"/>
    </location>
</feature>
<protein>
    <recommendedName>
        <fullName evidence="1">UDP-N-acetylenolpyruvoylglucosamine reductase</fullName>
        <ecNumber evidence="1">1.3.1.98</ecNumber>
    </recommendedName>
    <alternativeName>
        <fullName evidence="1">UDP-N-acetylmuramate dehydrogenase</fullName>
    </alternativeName>
</protein>
<organism>
    <name type="scientific">Ralstonia nicotianae (strain ATCC BAA-1114 / GMI1000)</name>
    <name type="common">Ralstonia solanacearum</name>
    <dbReference type="NCBI Taxonomy" id="267608"/>
    <lineage>
        <taxon>Bacteria</taxon>
        <taxon>Pseudomonadati</taxon>
        <taxon>Pseudomonadota</taxon>
        <taxon>Betaproteobacteria</taxon>
        <taxon>Burkholderiales</taxon>
        <taxon>Burkholderiaceae</taxon>
        <taxon>Ralstonia</taxon>
        <taxon>Ralstonia solanacearum species complex</taxon>
    </lineage>
</organism>
<dbReference type="EC" id="1.3.1.98" evidence="1"/>
<dbReference type="EMBL" id="AL646052">
    <property type="protein sequence ID" value="CAD16257.1"/>
    <property type="molecule type" value="Genomic_DNA"/>
</dbReference>
<dbReference type="RefSeq" id="WP_011002465.1">
    <property type="nucleotide sequence ID" value="NC_003295.1"/>
</dbReference>
<dbReference type="SMR" id="Q8XWC4"/>
<dbReference type="STRING" id="267608.RSc2550"/>
<dbReference type="EnsemblBacteria" id="CAD16257">
    <property type="protein sequence ID" value="CAD16257"/>
    <property type="gene ID" value="RSc2550"/>
</dbReference>
<dbReference type="KEGG" id="rso:RSc2550"/>
<dbReference type="PATRIC" id="fig|267608.8.peg.2592"/>
<dbReference type="eggNOG" id="COG0812">
    <property type="taxonomic scope" value="Bacteria"/>
</dbReference>
<dbReference type="HOGENOM" id="CLU_035304_0_0_4"/>
<dbReference type="UniPathway" id="UPA00219"/>
<dbReference type="Proteomes" id="UP000001436">
    <property type="component" value="Chromosome"/>
</dbReference>
<dbReference type="GO" id="GO:0005829">
    <property type="term" value="C:cytosol"/>
    <property type="evidence" value="ECO:0007669"/>
    <property type="project" value="TreeGrafter"/>
</dbReference>
<dbReference type="GO" id="GO:0071949">
    <property type="term" value="F:FAD binding"/>
    <property type="evidence" value="ECO:0007669"/>
    <property type="project" value="InterPro"/>
</dbReference>
<dbReference type="GO" id="GO:0008762">
    <property type="term" value="F:UDP-N-acetylmuramate dehydrogenase activity"/>
    <property type="evidence" value="ECO:0007669"/>
    <property type="project" value="UniProtKB-UniRule"/>
</dbReference>
<dbReference type="GO" id="GO:0051301">
    <property type="term" value="P:cell division"/>
    <property type="evidence" value="ECO:0007669"/>
    <property type="project" value="UniProtKB-KW"/>
</dbReference>
<dbReference type="GO" id="GO:0071555">
    <property type="term" value="P:cell wall organization"/>
    <property type="evidence" value="ECO:0007669"/>
    <property type="project" value="UniProtKB-KW"/>
</dbReference>
<dbReference type="GO" id="GO:0009252">
    <property type="term" value="P:peptidoglycan biosynthetic process"/>
    <property type="evidence" value="ECO:0007669"/>
    <property type="project" value="UniProtKB-UniRule"/>
</dbReference>
<dbReference type="GO" id="GO:0008360">
    <property type="term" value="P:regulation of cell shape"/>
    <property type="evidence" value="ECO:0007669"/>
    <property type="project" value="UniProtKB-KW"/>
</dbReference>
<dbReference type="Gene3D" id="3.30.465.10">
    <property type="match status" value="1"/>
</dbReference>
<dbReference type="Gene3D" id="3.90.78.10">
    <property type="entry name" value="UDP-N-acetylenolpyruvoylglucosamine reductase, C-terminal domain"/>
    <property type="match status" value="1"/>
</dbReference>
<dbReference type="Gene3D" id="3.30.43.10">
    <property type="entry name" value="Uridine Diphospho-n-acetylenolpyruvylglucosamine Reductase, domain 2"/>
    <property type="match status" value="1"/>
</dbReference>
<dbReference type="HAMAP" id="MF_00037">
    <property type="entry name" value="MurB"/>
    <property type="match status" value="1"/>
</dbReference>
<dbReference type="InterPro" id="IPR016166">
    <property type="entry name" value="FAD-bd_PCMH"/>
</dbReference>
<dbReference type="InterPro" id="IPR036318">
    <property type="entry name" value="FAD-bd_PCMH-like_sf"/>
</dbReference>
<dbReference type="InterPro" id="IPR016167">
    <property type="entry name" value="FAD-bd_PCMH_sub1"/>
</dbReference>
<dbReference type="InterPro" id="IPR016169">
    <property type="entry name" value="FAD-bd_PCMH_sub2"/>
</dbReference>
<dbReference type="InterPro" id="IPR003170">
    <property type="entry name" value="MurB"/>
</dbReference>
<dbReference type="InterPro" id="IPR011601">
    <property type="entry name" value="MurB_C"/>
</dbReference>
<dbReference type="InterPro" id="IPR036635">
    <property type="entry name" value="MurB_C_sf"/>
</dbReference>
<dbReference type="InterPro" id="IPR006094">
    <property type="entry name" value="Oxid_FAD_bind_N"/>
</dbReference>
<dbReference type="NCBIfam" id="TIGR00179">
    <property type="entry name" value="murB"/>
    <property type="match status" value="1"/>
</dbReference>
<dbReference type="NCBIfam" id="NF000755">
    <property type="entry name" value="PRK00046.1"/>
    <property type="match status" value="1"/>
</dbReference>
<dbReference type="NCBIfam" id="NF010478">
    <property type="entry name" value="PRK13903.1"/>
    <property type="match status" value="1"/>
</dbReference>
<dbReference type="PANTHER" id="PTHR21071">
    <property type="entry name" value="UDP-N-ACETYLENOLPYRUVOYLGLUCOSAMINE REDUCTASE"/>
    <property type="match status" value="1"/>
</dbReference>
<dbReference type="PANTHER" id="PTHR21071:SF4">
    <property type="entry name" value="UDP-N-ACETYLENOLPYRUVOYLGLUCOSAMINE REDUCTASE"/>
    <property type="match status" value="1"/>
</dbReference>
<dbReference type="Pfam" id="PF01565">
    <property type="entry name" value="FAD_binding_4"/>
    <property type="match status" value="1"/>
</dbReference>
<dbReference type="Pfam" id="PF02873">
    <property type="entry name" value="MurB_C"/>
    <property type="match status" value="1"/>
</dbReference>
<dbReference type="SUPFAM" id="SSF56176">
    <property type="entry name" value="FAD-binding/transporter-associated domain-like"/>
    <property type="match status" value="1"/>
</dbReference>
<dbReference type="SUPFAM" id="SSF56194">
    <property type="entry name" value="Uridine diphospho-N-Acetylenolpyruvylglucosamine reductase, MurB, C-terminal domain"/>
    <property type="match status" value="1"/>
</dbReference>
<dbReference type="PROSITE" id="PS51387">
    <property type="entry name" value="FAD_PCMH"/>
    <property type="match status" value="1"/>
</dbReference>